<accession>Q48DL4</accession>
<name>PROA_PSE14</name>
<comment type="function">
    <text evidence="1">Catalyzes the NADPH-dependent reduction of L-glutamate 5-phosphate into L-glutamate 5-semialdehyde and phosphate. The product spontaneously undergoes cyclization to form 1-pyrroline-5-carboxylate.</text>
</comment>
<comment type="catalytic activity">
    <reaction evidence="1">
        <text>L-glutamate 5-semialdehyde + phosphate + NADP(+) = L-glutamyl 5-phosphate + NADPH + H(+)</text>
        <dbReference type="Rhea" id="RHEA:19541"/>
        <dbReference type="ChEBI" id="CHEBI:15378"/>
        <dbReference type="ChEBI" id="CHEBI:43474"/>
        <dbReference type="ChEBI" id="CHEBI:57783"/>
        <dbReference type="ChEBI" id="CHEBI:58066"/>
        <dbReference type="ChEBI" id="CHEBI:58274"/>
        <dbReference type="ChEBI" id="CHEBI:58349"/>
        <dbReference type="EC" id="1.2.1.41"/>
    </reaction>
</comment>
<comment type="pathway">
    <text evidence="1">Amino-acid biosynthesis; L-proline biosynthesis; L-glutamate 5-semialdehyde from L-glutamate: step 2/2.</text>
</comment>
<comment type="subcellular location">
    <subcellularLocation>
        <location evidence="1">Cytoplasm</location>
    </subcellularLocation>
</comment>
<comment type="similarity">
    <text evidence="1">Belongs to the gamma-glutamyl phosphate reductase family.</text>
</comment>
<feature type="chain" id="PRO_0000230016" description="Gamma-glutamyl phosphate reductase">
    <location>
        <begin position="1"/>
        <end position="421"/>
    </location>
</feature>
<protein>
    <recommendedName>
        <fullName evidence="1">Gamma-glutamyl phosphate reductase</fullName>
        <shortName evidence="1">GPR</shortName>
        <ecNumber evidence="1">1.2.1.41</ecNumber>
    </recommendedName>
    <alternativeName>
        <fullName evidence="1">Glutamate-5-semialdehyde dehydrogenase</fullName>
    </alternativeName>
    <alternativeName>
        <fullName evidence="1">Glutamyl-gamma-semialdehyde dehydrogenase</fullName>
        <shortName evidence="1">GSA dehydrogenase</shortName>
    </alternativeName>
</protein>
<evidence type="ECO:0000255" key="1">
    <source>
        <dbReference type="HAMAP-Rule" id="MF_00412"/>
    </source>
</evidence>
<proteinExistence type="inferred from homology"/>
<dbReference type="EC" id="1.2.1.41" evidence="1"/>
<dbReference type="EMBL" id="CP000058">
    <property type="protein sequence ID" value="AAZ35909.1"/>
    <property type="molecule type" value="Genomic_DNA"/>
</dbReference>
<dbReference type="RefSeq" id="WP_004666288.1">
    <property type="nucleotide sequence ID" value="NC_005773.3"/>
</dbReference>
<dbReference type="SMR" id="Q48DL4"/>
<dbReference type="KEGG" id="psp:PSPPH_4411"/>
<dbReference type="eggNOG" id="COG0014">
    <property type="taxonomic scope" value="Bacteria"/>
</dbReference>
<dbReference type="HOGENOM" id="CLU_030231_0_0_6"/>
<dbReference type="UniPathway" id="UPA00098">
    <property type="reaction ID" value="UER00360"/>
</dbReference>
<dbReference type="Proteomes" id="UP000000551">
    <property type="component" value="Chromosome"/>
</dbReference>
<dbReference type="GO" id="GO:0005737">
    <property type="term" value="C:cytoplasm"/>
    <property type="evidence" value="ECO:0007669"/>
    <property type="project" value="UniProtKB-SubCell"/>
</dbReference>
<dbReference type="GO" id="GO:0004350">
    <property type="term" value="F:glutamate-5-semialdehyde dehydrogenase activity"/>
    <property type="evidence" value="ECO:0007669"/>
    <property type="project" value="UniProtKB-UniRule"/>
</dbReference>
<dbReference type="GO" id="GO:0050661">
    <property type="term" value="F:NADP binding"/>
    <property type="evidence" value="ECO:0007669"/>
    <property type="project" value="InterPro"/>
</dbReference>
<dbReference type="GO" id="GO:0055129">
    <property type="term" value="P:L-proline biosynthetic process"/>
    <property type="evidence" value="ECO:0007669"/>
    <property type="project" value="UniProtKB-UniRule"/>
</dbReference>
<dbReference type="CDD" id="cd07079">
    <property type="entry name" value="ALDH_F18-19_ProA-GPR"/>
    <property type="match status" value="1"/>
</dbReference>
<dbReference type="FunFam" id="3.40.309.10:FF:000006">
    <property type="entry name" value="Gamma-glutamyl phosphate reductase"/>
    <property type="match status" value="1"/>
</dbReference>
<dbReference type="Gene3D" id="3.40.605.10">
    <property type="entry name" value="Aldehyde Dehydrogenase, Chain A, domain 1"/>
    <property type="match status" value="1"/>
</dbReference>
<dbReference type="Gene3D" id="3.40.309.10">
    <property type="entry name" value="Aldehyde Dehydrogenase, Chain A, domain 2"/>
    <property type="match status" value="1"/>
</dbReference>
<dbReference type="HAMAP" id="MF_00412">
    <property type="entry name" value="ProA"/>
    <property type="match status" value="1"/>
</dbReference>
<dbReference type="InterPro" id="IPR016161">
    <property type="entry name" value="Ald_DH/histidinol_DH"/>
</dbReference>
<dbReference type="InterPro" id="IPR016163">
    <property type="entry name" value="Ald_DH_C"/>
</dbReference>
<dbReference type="InterPro" id="IPR016162">
    <property type="entry name" value="Ald_DH_N"/>
</dbReference>
<dbReference type="InterPro" id="IPR015590">
    <property type="entry name" value="Aldehyde_DH_dom"/>
</dbReference>
<dbReference type="InterPro" id="IPR020593">
    <property type="entry name" value="G-glutamylP_reductase_CS"/>
</dbReference>
<dbReference type="InterPro" id="IPR012134">
    <property type="entry name" value="Glu-5-SA_DH"/>
</dbReference>
<dbReference type="InterPro" id="IPR000965">
    <property type="entry name" value="GPR_dom"/>
</dbReference>
<dbReference type="NCBIfam" id="NF001221">
    <property type="entry name" value="PRK00197.1"/>
    <property type="match status" value="1"/>
</dbReference>
<dbReference type="NCBIfam" id="TIGR00407">
    <property type="entry name" value="proA"/>
    <property type="match status" value="1"/>
</dbReference>
<dbReference type="PANTHER" id="PTHR11063:SF8">
    <property type="entry name" value="DELTA-1-PYRROLINE-5-CARBOXYLATE SYNTHASE"/>
    <property type="match status" value="1"/>
</dbReference>
<dbReference type="PANTHER" id="PTHR11063">
    <property type="entry name" value="GLUTAMATE SEMIALDEHYDE DEHYDROGENASE"/>
    <property type="match status" value="1"/>
</dbReference>
<dbReference type="Pfam" id="PF00171">
    <property type="entry name" value="Aldedh"/>
    <property type="match status" value="1"/>
</dbReference>
<dbReference type="PIRSF" id="PIRSF000151">
    <property type="entry name" value="GPR"/>
    <property type="match status" value="1"/>
</dbReference>
<dbReference type="SUPFAM" id="SSF53720">
    <property type="entry name" value="ALDH-like"/>
    <property type="match status" value="1"/>
</dbReference>
<dbReference type="PROSITE" id="PS01223">
    <property type="entry name" value="PROA"/>
    <property type="match status" value="1"/>
</dbReference>
<reference key="1">
    <citation type="journal article" date="2005" name="J. Bacteriol.">
        <title>Whole-genome sequence analysis of Pseudomonas syringae pv. phaseolicola 1448A reveals divergence among pathovars in genes involved in virulence and transposition.</title>
        <authorList>
            <person name="Joardar V."/>
            <person name="Lindeberg M."/>
            <person name="Jackson R.W."/>
            <person name="Selengut J."/>
            <person name="Dodson R."/>
            <person name="Brinkac L.M."/>
            <person name="Daugherty S.C."/>
            <person name="DeBoy R.T."/>
            <person name="Durkin A.S."/>
            <person name="Gwinn Giglio M."/>
            <person name="Madupu R."/>
            <person name="Nelson W.C."/>
            <person name="Rosovitz M.J."/>
            <person name="Sullivan S.A."/>
            <person name="Crabtree J."/>
            <person name="Creasy T."/>
            <person name="Davidsen T.M."/>
            <person name="Haft D.H."/>
            <person name="Zafar N."/>
            <person name="Zhou L."/>
            <person name="Halpin R."/>
            <person name="Holley T."/>
            <person name="Khouri H.M."/>
            <person name="Feldblyum T.V."/>
            <person name="White O."/>
            <person name="Fraser C.M."/>
            <person name="Chatterjee A.K."/>
            <person name="Cartinhour S."/>
            <person name="Schneider D."/>
            <person name="Mansfield J.W."/>
            <person name="Collmer A."/>
            <person name="Buell R."/>
        </authorList>
    </citation>
    <scope>NUCLEOTIDE SEQUENCE [LARGE SCALE GENOMIC DNA]</scope>
    <source>
        <strain>1448A / Race 6</strain>
    </source>
</reference>
<gene>
    <name evidence="1" type="primary">proA</name>
    <name type="ordered locus">PSPPH_4411</name>
</gene>
<organism>
    <name type="scientific">Pseudomonas savastanoi pv. phaseolicola (strain 1448A / Race 6)</name>
    <name type="common">Pseudomonas syringae pv. phaseolicola (strain 1448A / Race 6)</name>
    <dbReference type="NCBI Taxonomy" id="264730"/>
    <lineage>
        <taxon>Bacteria</taxon>
        <taxon>Pseudomonadati</taxon>
        <taxon>Pseudomonadota</taxon>
        <taxon>Gammaproteobacteria</taxon>
        <taxon>Pseudomonadales</taxon>
        <taxon>Pseudomonadaceae</taxon>
        <taxon>Pseudomonas</taxon>
    </lineage>
</organism>
<keyword id="KW-0028">Amino-acid biosynthesis</keyword>
<keyword id="KW-0963">Cytoplasm</keyword>
<keyword id="KW-0521">NADP</keyword>
<keyword id="KW-0560">Oxidoreductase</keyword>
<keyword id="KW-0641">Proline biosynthesis</keyword>
<sequence>MTESVLDYMTRLGRAAREASRVIGRASTAQKNRALQATAAALDEARAELSAANALDLANGQANGLEPAMLERLALTPARIDSMIVGLRQVAGLADPVGAIRDMSYRPSGIQVGKMRVPLGVVGIIYESRPNVTIDAASLCLKSGNATILRGGSEAIHSNRAIAACIERGLAEARLPAAVVQVVETTDRAAVGALITMPEYVDVIVPRGGKGLIERVSRDARVPVIKHLDGICHVYVSAHADLAKAQKIAFNAKTYRYGICGAMETLLVDQTIAADFLPAMAAQFREKGVELRGCERTRDLIDVIPATEDDWHTEYLAAILSIRVVSGLDEAIEHINHYGSHHSDAIVSDHQSQIRRFMAEVDSSSVMVNAPTSFADGFEYGLGAEIGISTDKLHARGPVGLEGLTCEKYIVIGDGQLRGQA</sequence>